<gene>
    <name evidence="1" type="primary">ruvB</name>
    <name type="ordered locus">Psyc_0710</name>
</gene>
<reference key="1">
    <citation type="journal article" date="2010" name="Appl. Environ. Microbiol.">
        <title>The genome sequence of Psychrobacter arcticus 273-4, a psychroactive Siberian permafrost bacterium, reveals mechanisms for adaptation to low-temperature growth.</title>
        <authorList>
            <person name="Ayala-del-Rio H.L."/>
            <person name="Chain P.S."/>
            <person name="Grzymski J.J."/>
            <person name="Ponder M.A."/>
            <person name="Ivanova N."/>
            <person name="Bergholz P.W."/>
            <person name="Di Bartolo G."/>
            <person name="Hauser L."/>
            <person name="Land M."/>
            <person name="Bakermans C."/>
            <person name="Rodrigues D."/>
            <person name="Klappenbach J."/>
            <person name="Zarka D."/>
            <person name="Larimer F."/>
            <person name="Richardson P."/>
            <person name="Murray A."/>
            <person name="Thomashow M."/>
            <person name="Tiedje J.M."/>
        </authorList>
    </citation>
    <scope>NUCLEOTIDE SEQUENCE [LARGE SCALE GENOMIC DNA]</scope>
    <source>
        <strain>DSM 17307 / VKM B-2377 / 273-4</strain>
    </source>
</reference>
<accession>Q4FTT9</accession>
<organism>
    <name type="scientific">Psychrobacter arcticus (strain DSM 17307 / VKM B-2377 / 273-4)</name>
    <dbReference type="NCBI Taxonomy" id="259536"/>
    <lineage>
        <taxon>Bacteria</taxon>
        <taxon>Pseudomonadati</taxon>
        <taxon>Pseudomonadota</taxon>
        <taxon>Gammaproteobacteria</taxon>
        <taxon>Moraxellales</taxon>
        <taxon>Moraxellaceae</taxon>
        <taxon>Psychrobacter</taxon>
    </lineage>
</organism>
<name>RUVB_PSYA2</name>
<comment type="function">
    <text evidence="1">The RuvA-RuvB-RuvC complex processes Holliday junction (HJ) DNA during genetic recombination and DNA repair, while the RuvA-RuvB complex plays an important role in the rescue of blocked DNA replication forks via replication fork reversal (RFR). RuvA specifically binds to HJ cruciform DNA, conferring on it an open structure. The RuvB hexamer acts as an ATP-dependent pump, pulling dsDNA into and through the RuvAB complex. RuvB forms 2 homohexamers on either side of HJ DNA bound by 1 or 2 RuvA tetramers; 4 subunits per hexamer contact DNA at a time. Coordinated motions by a converter formed by DNA-disengaged RuvB subunits stimulates ATP hydrolysis and nucleotide exchange. Immobilization of the converter enables RuvB to convert the ATP-contained energy into a lever motion, pulling 2 nucleotides of DNA out of the RuvA tetramer per ATP hydrolyzed, thus driving DNA branch migration. The RuvB motors rotate together with the DNA substrate, which together with the progressing nucleotide cycle form the mechanistic basis for DNA recombination by continuous HJ branch migration. Branch migration allows RuvC to scan DNA until it finds its consensus sequence, where it cleaves and resolves cruciform DNA.</text>
</comment>
<comment type="catalytic activity">
    <reaction evidence="1">
        <text>ATP + H2O = ADP + phosphate + H(+)</text>
        <dbReference type="Rhea" id="RHEA:13065"/>
        <dbReference type="ChEBI" id="CHEBI:15377"/>
        <dbReference type="ChEBI" id="CHEBI:15378"/>
        <dbReference type="ChEBI" id="CHEBI:30616"/>
        <dbReference type="ChEBI" id="CHEBI:43474"/>
        <dbReference type="ChEBI" id="CHEBI:456216"/>
    </reaction>
</comment>
<comment type="subunit">
    <text evidence="1">Homohexamer. Forms an RuvA(8)-RuvB(12)-Holliday junction (HJ) complex. HJ DNA is sandwiched between 2 RuvA tetramers; dsDNA enters through RuvA and exits via RuvB. An RuvB hexamer assembles on each DNA strand where it exits the tetramer. Each RuvB hexamer is contacted by two RuvA subunits (via domain III) on 2 adjacent RuvB subunits; this complex drives branch migration. In the full resolvosome a probable DNA-RuvA(4)-RuvB(12)-RuvC(2) complex forms which resolves the HJ.</text>
</comment>
<comment type="subcellular location">
    <subcellularLocation>
        <location evidence="1">Cytoplasm</location>
    </subcellularLocation>
</comment>
<comment type="domain">
    <text evidence="1">Has 3 domains, the large (RuvB-L) and small ATPase (RuvB-S) domains and the C-terminal head (RuvB-H) domain. The head domain binds DNA, while the ATPase domains jointly bind ATP, ADP or are empty depending on the state of the subunit in the translocation cycle. During a single DNA translocation step the structure of each domain remains the same, but their relative positions change.</text>
</comment>
<comment type="similarity">
    <text evidence="1">Belongs to the RuvB family.</text>
</comment>
<keyword id="KW-0067">ATP-binding</keyword>
<keyword id="KW-0963">Cytoplasm</keyword>
<keyword id="KW-0227">DNA damage</keyword>
<keyword id="KW-0233">DNA recombination</keyword>
<keyword id="KW-0234">DNA repair</keyword>
<keyword id="KW-0238">DNA-binding</keyword>
<keyword id="KW-0378">Hydrolase</keyword>
<keyword id="KW-0547">Nucleotide-binding</keyword>
<keyword id="KW-1185">Reference proteome</keyword>
<evidence type="ECO:0000255" key="1">
    <source>
        <dbReference type="HAMAP-Rule" id="MF_00016"/>
    </source>
</evidence>
<protein>
    <recommendedName>
        <fullName evidence="1">Holliday junction branch migration complex subunit RuvB</fullName>
        <ecNumber evidence="1">3.6.4.-</ecNumber>
    </recommendedName>
</protein>
<proteinExistence type="inferred from homology"/>
<dbReference type="EC" id="3.6.4.-" evidence="1"/>
<dbReference type="EMBL" id="CP000082">
    <property type="protein sequence ID" value="AAZ18569.1"/>
    <property type="molecule type" value="Genomic_DNA"/>
</dbReference>
<dbReference type="SMR" id="Q4FTT9"/>
<dbReference type="STRING" id="259536.Psyc_0710"/>
<dbReference type="KEGG" id="par:Psyc_0710"/>
<dbReference type="eggNOG" id="COG2255">
    <property type="taxonomic scope" value="Bacteria"/>
</dbReference>
<dbReference type="HOGENOM" id="CLU_055599_1_0_6"/>
<dbReference type="Proteomes" id="UP000000546">
    <property type="component" value="Chromosome"/>
</dbReference>
<dbReference type="GO" id="GO:0005737">
    <property type="term" value="C:cytoplasm"/>
    <property type="evidence" value="ECO:0007669"/>
    <property type="project" value="UniProtKB-SubCell"/>
</dbReference>
<dbReference type="GO" id="GO:0048476">
    <property type="term" value="C:Holliday junction resolvase complex"/>
    <property type="evidence" value="ECO:0007669"/>
    <property type="project" value="UniProtKB-UniRule"/>
</dbReference>
<dbReference type="GO" id="GO:0005524">
    <property type="term" value="F:ATP binding"/>
    <property type="evidence" value="ECO:0007669"/>
    <property type="project" value="UniProtKB-UniRule"/>
</dbReference>
<dbReference type="GO" id="GO:0016887">
    <property type="term" value="F:ATP hydrolysis activity"/>
    <property type="evidence" value="ECO:0007669"/>
    <property type="project" value="InterPro"/>
</dbReference>
<dbReference type="GO" id="GO:0000400">
    <property type="term" value="F:four-way junction DNA binding"/>
    <property type="evidence" value="ECO:0007669"/>
    <property type="project" value="UniProtKB-UniRule"/>
</dbReference>
<dbReference type="GO" id="GO:0009378">
    <property type="term" value="F:four-way junction helicase activity"/>
    <property type="evidence" value="ECO:0007669"/>
    <property type="project" value="InterPro"/>
</dbReference>
<dbReference type="GO" id="GO:0006310">
    <property type="term" value="P:DNA recombination"/>
    <property type="evidence" value="ECO:0007669"/>
    <property type="project" value="UniProtKB-UniRule"/>
</dbReference>
<dbReference type="GO" id="GO:0006281">
    <property type="term" value="P:DNA repair"/>
    <property type="evidence" value="ECO:0007669"/>
    <property type="project" value="UniProtKB-UniRule"/>
</dbReference>
<dbReference type="CDD" id="cd00009">
    <property type="entry name" value="AAA"/>
    <property type="match status" value="1"/>
</dbReference>
<dbReference type="FunFam" id="1.10.8.60:FF:000023">
    <property type="entry name" value="Holliday junction ATP-dependent DNA helicase RuvB"/>
    <property type="match status" value="1"/>
</dbReference>
<dbReference type="FunFam" id="3.40.50.300:FF:000073">
    <property type="entry name" value="Holliday junction ATP-dependent DNA helicase RuvB"/>
    <property type="match status" value="1"/>
</dbReference>
<dbReference type="Gene3D" id="1.10.8.60">
    <property type="match status" value="1"/>
</dbReference>
<dbReference type="Gene3D" id="3.40.50.300">
    <property type="entry name" value="P-loop containing nucleotide triphosphate hydrolases"/>
    <property type="match status" value="1"/>
</dbReference>
<dbReference type="Gene3D" id="1.10.10.10">
    <property type="entry name" value="Winged helix-like DNA-binding domain superfamily/Winged helix DNA-binding domain"/>
    <property type="match status" value="1"/>
</dbReference>
<dbReference type="HAMAP" id="MF_00016">
    <property type="entry name" value="DNA_HJ_migration_RuvB"/>
    <property type="match status" value="1"/>
</dbReference>
<dbReference type="InterPro" id="IPR003593">
    <property type="entry name" value="AAA+_ATPase"/>
</dbReference>
<dbReference type="InterPro" id="IPR041445">
    <property type="entry name" value="AAA_lid_4"/>
</dbReference>
<dbReference type="InterPro" id="IPR004605">
    <property type="entry name" value="DNA_helicase_Holl-junc_RuvB"/>
</dbReference>
<dbReference type="InterPro" id="IPR027417">
    <property type="entry name" value="P-loop_NTPase"/>
</dbReference>
<dbReference type="InterPro" id="IPR008824">
    <property type="entry name" value="RuvB-like_N"/>
</dbReference>
<dbReference type="InterPro" id="IPR008823">
    <property type="entry name" value="RuvB_C"/>
</dbReference>
<dbReference type="InterPro" id="IPR036388">
    <property type="entry name" value="WH-like_DNA-bd_sf"/>
</dbReference>
<dbReference type="InterPro" id="IPR036390">
    <property type="entry name" value="WH_DNA-bd_sf"/>
</dbReference>
<dbReference type="NCBIfam" id="NF000868">
    <property type="entry name" value="PRK00080.1"/>
    <property type="match status" value="1"/>
</dbReference>
<dbReference type="NCBIfam" id="TIGR00635">
    <property type="entry name" value="ruvB"/>
    <property type="match status" value="1"/>
</dbReference>
<dbReference type="PANTHER" id="PTHR42848">
    <property type="match status" value="1"/>
</dbReference>
<dbReference type="PANTHER" id="PTHR42848:SF1">
    <property type="entry name" value="HOLLIDAY JUNCTION BRANCH MIGRATION COMPLEX SUBUNIT RUVB"/>
    <property type="match status" value="1"/>
</dbReference>
<dbReference type="Pfam" id="PF17864">
    <property type="entry name" value="AAA_lid_4"/>
    <property type="match status" value="1"/>
</dbReference>
<dbReference type="Pfam" id="PF05491">
    <property type="entry name" value="RuvB_C"/>
    <property type="match status" value="1"/>
</dbReference>
<dbReference type="Pfam" id="PF05496">
    <property type="entry name" value="RuvB_N"/>
    <property type="match status" value="1"/>
</dbReference>
<dbReference type="SMART" id="SM00382">
    <property type="entry name" value="AAA"/>
    <property type="match status" value="1"/>
</dbReference>
<dbReference type="SUPFAM" id="SSF52540">
    <property type="entry name" value="P-loop containing nucleoside triphosphate hydrolases"/>
    <property type="match status" value="1"/>
</dbReference>
<dbReference type="SUPFAM" id="SSF46785">
    <property type="entry name" value="Winged helix' DNA-binding domain"/>
    <property type="match status" value="1"/>
</dbReference>
<sequence length="331" mass="36274">MAKTMMQDRLINPLEGAADAPDANIRPALLAEYIGQPVVREQMEVFIQAARARDEALDHTLIFGPPGLGKTTLANIIAREMGGNLRSTSGPVLERAGDLAAMLTNLEAGDVLFIDEIHRLSPVIEEILYPAMEDFQLDIMIGEGPAARSIKLELPPFTLVAATTRAGLLTSPLRDRFGIVQRLEFYNIADLTTIVSRAARLMRVPMSEDGAVEIARRARGTPRIANRLLRRVRDYAQVRGDGSINGAIAGSALDMLAVDRRGLDHLDRRYIEILHERFDGGPAGVEAVAAAMAEDRGTLEDVIEPYLIQQGYVLRTARGRVLTQMAIDQMV</sequence>
<feature type="chain" id="PRO_0000235395" description="Holliday junction branch migration complex subunit RuvB">
    <location>
        <begin position="1"/>
        <end position="331"/>
    </location>
</feature>
<feature type="region of interest" description="Large ATPase domain (RuvB-L)" evidence="1">
    <location>
        <begin position="1"/>
        <end position="186"/>
    </location>
</feature>
<feature type="region of interest" description="Small ATPAse domain (RuvB-S)" evidence="1">
    <location>
        <begin position="187"/>
        <end position="257"/>
    </location>
</feature>
<feature type="region of interest" description="Head domain (RuvB-H)" evidence="1">
    <location>
        <begin position="260"/>
        <end position="331"/>
    </location>
</feature>
<feature type="binding site" evidence="1">
    <location>
        <position position="25"/>
    </location>
    <ligand>
        <name>ATP</name>
        <dbReference type="ChEBI" id="CHEBI:30616"/>
    </ligand>
</feature>
<feature type="binding site" evidence="1">
    <location>
        <position position="26"/>
    </location>
    <ligand>
        <name>ATP</name>
        <dbReference type="ChEBI" id="CHEBI:30616"/>
    </ligand>
</feature>
<feature type="binding site" evidence="1">
    <location>
        <position position="67"/>
    </location>
    <ligand>
        <name>ATP</name>
        <dbReference type="ChEBI" id="CHEBI:30616"/>
    </ligand>
</feature>
<feature type="binding site" evidence="1">
    <location>
        <position position="70"/>
    </location>
    <ligand>
        <name>ATP</name>
        <dbReference type="ChEBI" id="CHEBI:30616"/>
    </ligand>
</feature>
<feature type="binding site" evidence="1">
    <location>
        <position position="71"/>
    </location>
    <ligand>
        <name>ATP</name>
        <dbReference type="ChEBI" id="CHEBI:30616"/>
    </ligand>
</feature>
<feature type="binding site" evidence="1">
    <location>
        <position position="71"/>
    </location>
    <ligand>
        <name>Mg(2+)</name>
        <dbReference type="ChEBI" id="CHEBI:18420"/>
    </ligand>
</feature>
<feature type="binding site" evidence="1">
    <location>
        <position position="72"/>
    </location>
    <ligand>
        <name>ATP</name>
        <dbReference type="ChEBI" id="CHEBI:30616"/>
    </ligand>
</feature>
<feature type="binding site" evidence="1">
    <location>
        <begin position="133"/>
        <end position="135"/>
    </location>
    <ligand>
        <name>ATP</name>
        <dbReference type="ChEBI" id="CHEBI:30616"/>
    </ligand>
</feature>
<feature type="binding site" evidence="1">
    <location>
        <position position="176"/>
    </location>
    <ligand>
        <name>ATP</name>
        <dbReference type="ChEBI" id="CHEBI:30616"/>
    </ligand>
</feature>
<feature type="binding site" evidence="1">
    <location>
        <position position="186"/>
    </location>
    <ligand>
        <name>ATP</name>
        <dbReference type="ChEBI" id="CHEBI:30616"/>
    </ligand>
</feature>
<feature type="binding site" evidence="1">
    <location>
        <position position="223"/>
    </location>
    <ligand>
        <name>ATP</name>
        <dbReference type="ChEBI" id="CHEBI:30616"/>
    </ligand>
</feature>
<feature type="binding site" evidence="1">
    <location>
        <position position="296"/>
    </location>
    <ligand>
        <name>DNA</name>
        <dbReference type="ChEBI" id="CHEBI:16991"/>
    </ligand>
</feature>
<feature type="binding site" evidence="1">
    <location>
        <position position="315"/>
    </location>
    <ligand>
        <name>DNA</name>
        <dbReference type="ChEBI" id="CHEBI:16991"/>
    </ligand>
</feature>
<feature type="binding site" evidence="1">
    <location>
        <position position="320"/>
    </location>
    <ligand>
        <name>DNA</name>
        <dbReference type="ChEBI" id="CHEBI:16991"/>
    </ligand>
</feature>